<keyword id="KW-0067">ATP-binding</keyword>
<keyword id="KW-0963">Cytoplasm</keyword>
<keyword id="KW-0418">Kinase</keyword>
<keyword id="KW-0460">Magnesium</keyword>
<keyword id="KW-0479">Metal-binding</keyword>
<keyword id="KW-0546">Nucleotide metabolism</keyword>
<keyword id="KW-0547">Nucleotide-binding</keyword>
<keyword id="KW-0597">Phosphoprotein</keyword>
<keyword id="KW-0808">Transferase</keyword>
<comment type="function">
    <text evidence="1">Major role in the synthesis of nucleoside triphosphates other than ATP. The ATP gamma phosphate is transferred to the NDP beta phosphate via a ping-pong mechanism, using a phosphorylated active-site intermediate.</text>
</comment>
<comment type="catalytic activity">
    <reaction evidence="1">
        <text>a 2'-deoxyribonucleoside 5'-diphosphate + ATP = a 2'-deoxyribonucleoside 5'-triphosphate + ADP</text>
        <dbReference type="Rhea" id="RHEA:44640"/>
        <dbReference type="ChEBI" id="CHEBI:30616"/>
        <dbReference type="ChEBI" id="CHEBI:61560"/>
        <dbReference type="ChEBI" id="CHEBI:73316"/>
        <dbReference type="ChEBI" id="CHEBI:456216"/>
        <dbReference type="EC" id="2.7.4.6"/>
    </reaction>
</comment>
<comment type="catalytic activity">
    <reaction evidence="1">
        <text>a ribonucleoside 5'-diphosphate + ATP = a ribonucleoside 5'-triphosphate + ADP</text>
        <dbReference type="Rhea" id="RHEA:18113"/>
        <dbReference type="ChEBI" id="CHEBI:30616"/>
        <dbReference type="ChEBI" id="CHEBI:57930"/>
        <dbReference type="ChEBI" id="CHEBI:61557"/>
        <dbReference type="ChEBI" id="CHEBI:456216"/>
        <dbReference type="EC" id="2.7.4.6"/>
    </reaction>
</comment>
<comment type="cofactor">
    <cofactor evidence="1">
        <name>Mg(2+)</name>
        <dbReference type="ChEBI" id="CHEBI:18420"/>
    </cofactor>
</comment>
<comment type="subunit">
    <text evidence="1">Homotetramer.</text>
</comment>
<comment type="subcellular location">
    <subcellularLocation>
        <location evidence="1">Cytoplasm</location>
    </subcellularLocation>
</comment>
<comment type="similarity">
    <text evidence="1">Belongs to the NDK family.</text>
</comment>
<dbReference type="EC" id="2.7.4.6" evidence="1"/>
<dbReference type="EMBL" id="CP000247">
    <property type="protein sequence ID" value="ABG70512.1"/>
    <property type="molecule type" value="Genomic_DNA"/>
</dbReference>
<dbReference type="RefSeq" id="WP_000963841.1">
    <property type="nucleotide sequence ID" value="NC_008253.1"/>
</dbReference>
<dbReference type="SMR" id="Q0TEW7"/>
<dbReference type="GeneID" id="86947407"/>
<dbReference type="KEGG" id="ecp:ECP_2523"/>
<dbReference type="HOGENOM" id="CLU_060216_8_1_6"/>
<dbReference type="Proteomes" id="UP000009182">
    <property type="component" value="Chromosome"/>
</dbReference>
<dbReference type="GO" id="GO:0005737">
    <property type="term" value="C:cytoplasm"/>
    <property type="evidence" value="ECO:0007669"/>
    <property type="project" value="UniProtKB-SubCell"/>
</dbReference>
<dbReference type="GO" id="GO:0005524">
    <property type="term" value="F:ATP binding"/>
    <property type="evidence" value="ECO:0007669"/>
    <property type="project" value="UniProtKB-UniRule"/>
</dbReference>
<dbReference type="GO" id="GO:0046872">
    <property type="term" value="F:metal ion binding"/>
    <property type="evidence" value="ECO:0007669"/>
    <property type="project" value="UniProtKB-KW"/>
</dbReference>
<dbReference type="GO" id="GO:0004550">
    <property type="term" value="F:nucleoside diphosphate kinase activity"/>
    <property type="evidence" value="ECO:0007669"/>
    <property type="project" value="UniProtKB-UniRule"/>
</dbReference>
<dbReference type="GO" id="GO:0006241">
    <property type="term" value="P:CTP biosynthetic process"/>
    <property type="evidence" value="ECO:0007669"/>
    <property type="project" value="UniProtKB-UniRule"/>
</dbReference>
<dbReference type="GO" id="GO:0006183">
    <property type="term" value="P:GTP biosynthetic process"/>
    <property type="evidence" value="ECO:0007669"/>
    <property type="project" value="UniProtKB-UniRule"/>
</dbReference>
<dbReference type="GO" id="GO:0006228">
    <property type="term" value="P:UTP biosynthetic process"/>
    <property type="evidence" value="ECO:0007669"/>
    <property type="project" value="UniProtKB-UniRule"/>
</dbReference>
<dbReference type="CDD" id="cd04413">
    <property type="entry name" value="NDPk_I"/>
    <property type="match status" value="1"/>
</dbReference>
<dbReference type="FunFam" id="3.30.70.141:FF:000001">
    <property type="entry name" value="Nucleoside diphosphate kinase"/>
    <property type="match status" value="1"/>
</dbReference>
<dbReference type="Gene3D" id="3.30.70.141">
    <property type="entry name" value="Nucleoside diphosphate kinase-like domain"/>
    <property type="match status" value="1"/>
</dbReference>
<dbReference type="HAMAP" id="MF_00451">
    <property type="entry name" value="NDP_kinase"/>
    <property type="match status" value="1"/>
</dbReference>
<dbReference type="InterPro" id="IPR034907">
    <property type="entry name" value="NDK-like_dom"/>
</dbReference>
<dbReference type="InterPro" id="IPR036850">
    <property type="entry name" value="NDK-like_dom_sf"/>
</dbReference>
<dbReference type="InterPro" id="IPR001564">
    <property type="entry name" value="Nucleoside_diP_kinase"/>
</dbReference>
<dbReference type="InterPro" id="IPR023005">
    <property type="entry name" value="Nucleoside_diP_kinase_AS"/>
</dbReference>
<dbReference type="NCBIfam" id="NF001908">
    <property type="entry name" value="PRK00668.1"/>
    <property type="match status" value="1"/>
</dbReference>
<dbReference type="PANTHER" id="PTHR46161">
    <property type="entry name" value="NUCLEOSIDE DIPHOSPHATE KINASE"/>
    <property type="match status" value="1"/>
</dbReference>
<dbReference type="PANTHER" id="PTHR46161:SF3">
    <property type="entry name" value="NUCLEOSIDE DIPHOSPHATE KINASE DDB_G0292928-RELATED"/>
    <property type="match status" value="1"/>
</dbReference>
<dbReference type="Pfam" id="PF00334">
    <property type="entry name" value="NDK"/>
    <property type="match status" value="1"/>
</dbReference>
<dbReference type="PRINTS" id="PR01243">
    <property type="entry name" value="NUCDPKINASE"/>
</dbReference>
<dbReference type="SMART" id="SM00562">
    <property type="entry name" value="NDK"/>
    <property type="match status" value="1"/>
</dbReference>
<dbReference type="SUPFAM" id="SSF54919">
    <property type="entry name" value="Nucleoside diphosphate kinase, NDK"/>
    <property type="match status" value="1"/>
</dbReference>
<dbReference type="PROSITE" id="PS00469">
    <property type="entry name" value="NDPK"/>
    <property type="match status" value="1"/>
</dbReference>
<dbReference type="PROSITE" id="PS51374">
    <property type="entry name" value="NDPK_LIKE"/>
    <property type="match status" value="1"/>
</dbReference>
<reference key="1">
    <citation type="journal article" date="2006" name="Mol. Microbiol.">
        <title>Role of pathogenicity island-associated integrases in the genome plasticity of uropathogenic Escherichia coli strain 536.</title>
        <authorList>
            <person name="Hochhut B."/>
            <person name="Wilde C."/>
            <person name="Balling G."/>
            <person name="Middendorf B."/>
            <person name="Dobrindt U."/>
            <person name="Brzuszkiewicz E."/>
            <person name="Gottschalk G."/>
            <person name="Carniel E."/>
            <person name="Hacker J."/>
        </authorList>
    </citation>
    <scope>NUCLEOTIDE SEQUENCE [LARGE SCALE GENOMIC DNA]</scope>
    <source>
        <strain>536 / UPEC</strain>
    </source>
</reference>
<sequence length="143" mass="15436">MAIERTFSIIKPNAVAKNVIGSIFARFEAAGFKIVGTKMLHLTVEQARGFYAEHDGKPFFDGLVEFMTSGPIVVSVLEGENAVQRHRDLLGATNPANALAGTLRADYADSLTENGTHGSDSVESAAREIAYFFGEGEVCPRTR</sequence>
<proteinExistence type="inferred from homology"/>
<protein>
    <recommendedName>
        <fullName evidence="1">Nucleoside diphosphate kinase</fullName>
        <shortName evidence="1">NDK</shortName>
        <shortName evidence="1">NDP kinase</shortName>
        <ecNumber evidence="1">2.7.4.6</ecNumber>
    </recommendedName>
    <alternativeName>
        <fullName evidence="1">Nucleoside-2-P kinase</fullName>
    </alternativeName>
</protein>
<evidence type="ECO:0000255" key="1">
    <source>
        <dbReference type="HAMAP-Rule" id="MF_00451"/>
    </source>
</evidence>
<feature type="chain" id="PRO_0000267778" description="Nucleoside diphosphate kinase">
    <location>
        <begin position="1"/>
        <end position="143"/>
    </location>
</feature>
<feature type="active site" description="Pros-phosphohistidine intermediate" evidence="1">
    <location>
        <position position="117"/>
    </location>
</feature>
<feature type="binding site" evidence="1">
    <location>
        <position position="11"/>
    </location>
    <ligand>
        <name>ATP</name>
        <dbReference type="ChEBI" id="CHEBI:30616"/>
    </ligand>
</feature>
<feature type="binding site" evidence="1">
    <location>
        <position position="59"/>
    </location>
    <ligand>
        <name>ATP</name>
        <dbReference type="ChEBI" id="CHEBI:30616"/>
    </ligand>
</feature>
<feature type="binding site" evidence="1">
    <location>
        <position position="87"/>
    </location>
    <ligand>
        <name>ATP</name>
        <dbReference type="ChEBI" id="CHEBI:30616"/>
    </ligand>
</feature>
<feature type="binding site" evidence="1">
    <location>
        <position position="93"/>
    </location>
    <ligand>
        <name>ATP</name>
        <dbReference type="ChEBI" id="CHEBI:30616"/>
    </ligand>
</feature>
<feature type="binding site" evidence="1">
    <location>
        <position position="104"/>
    </location>
    <ligand>
        <name>ATP</name>
        <dbReference type="ChEBI" id="CHEBI:30616"/>
    </ligand>
</feature>
<feature type="binding site" evidence="1">
    <location>
        <position position="114"/>
    </location>
    <ligand>
        <name>ATP</name>
        <dbReference type="ChEBI" id="CHEBI:30616"/>
    </ligand>
</feature>
<organism>
    <name type="scientific">Escherichia coli O6:K15:H31 (strain 536 / UPEC)</name>
    <dbReference type="NCBI Taxonomy" id="362663"/>
    <lineage>
        <taxon>Bacteria</taxon>
        <taxon>Pseudomonadati</taxon>
        <taxon>Pseudomonadota</taxon>
        <taxon>Gammaproteobacteria</taxon>
        <taxon>Enterobacterales</taxon>
        <taxon>Enterobacteriaceae</taxon>
        <taxon>Escherichia</taxon>
    </lineage>
</organism>
<gene>
    <name evidence="1" type="primary">ndk</name>
    <name type="ordered locus">ECP_2523</name>
</gene>
<name>NDK_ECOL5</name>
<accession>Q0TEW7</accession>